<dbReference type="EC" id="2.7.8.7" evidence="1"/>
<dbReference type="EMBL" id="AE017262">
    <property type="protein sequence ID" value="AAT03684.1"/>
    <property type="molecule type" value="Genomic_DNA"/>
</dbReference>
<dbReference type="RefSeq" id="WP_003721452.1">
    <property type="nucleotide sequence ID" value="NC_002973.6"/>
</dbReference>
<dbReference type="SMR" id="Q721T0"/>
<dbReference type="KEGG" id="lmf:LMOf2365_0904"/>
<dbReference type="HOGENOM" id="CLU_089696_1_2_9"/>
<dbReference type="GO" id="GO:0005737">
    <property type="term" value="C:cytoplasm"/>
    <property type="evidence" value="ECO:0007669"/>
    <property type="project" value="UniProtKB-SubCell"/>
</dbReference>
<dbReference type="GO" id="GO:0008897">
    <property type="term" value="F:holo-[acyl-carrier-protein] synthase activity"/>
    <property type="evidence" value="ECO:0007669"/>
    <property type="project" value="UniProtKB-UniRule"/>
</dbReference>
<dbReference type="GO" id="GO:0000287">
    <property type="term" value="F:magnesium ion binding"/>
    <property type="evidence" value="ECO:0007669"/>
    <property type="project" value="UniProtKB-UniRule"/>
</dbReference>
<dbReference type="GO" id="GO:0006633">
    <property type="term" value="P:fatty acid biosynthetic process"/>
    <property type="evidence" value="ECO:0007669"/>
    <property type="project" value="UniProtKB-UniRule"/>
</dbReference>
<dbReference type="Gene3D" id="3.90.470.20">
    <property type="entry name" value="4'-phosphopantetheinyl transferase domain"/>
    <property type="match status" value="1"/>
</dbReference>
<dbReference type="HAMAP" id="MF_00101">
    <property type="entry name" value="AcpS"/>
    <property type="match status" value="1"/>
</dbReference>
<dbReference type="InterPro" id="IPR008278">
    <property type="entry name" value="4-PPantetheinyl_Trfase_dom"/>
</dbReference>
<dbReference type="InterPro" id="IPR037143">
    <property type="entry name" value="4-PPantetheinyl_Trfase_dom_sf"/>
</dbReference>
<dbReference type="InterPro" id="IPR002582">
    <property type="entry name" value="ACPS"/>
</dbReference>
<dbReference type="InterPro" id="IPR004568">
    <property type="entry name" value="Ppantetheine-prot_Trfase_dom"/>
</dbReference>
<dbReference type="NCBIfam" id="TIGR00516">
    <property type="entry name" value="acpS"/>
    <property type="match status" value="1"/>
</dbReference>
<dbReference type="NCBIfam" id="TIGR00556">
    <property type="entry name" value="pantethn_trn"/>
    <property type="match status" value="1"/>
</dbReference>
<dbReference type="Pfam" id="PF01648">
    <property type="entry name" value="ACPS"/>
    <property type="match status" value="1"/>
</dbReference>
<dbReference type="SUPFAM" id="SSF56214">
    <property type="entry name" value="4'-phosphopantetheinyl transferase"/>
    <property type="match status" value="1"/>
</dbReference>
<organism>
    <name type="scientific">Listeria monocytogenes serotype 4b (strain F2365)</name>
    <dbReference type="NCBI Taxonomy" id="265669"/>
    <lineage>
        <taxon>Bacteria</taxon>
        <taxon>Bacillati</taxon>
        <taxon>Bacillota</taxon>
        <taxon>Bacilli</taxon>
        <taxon>Bacillales</taxon>
        <taxon>Listeriaceae</taxon>
        <taxon>Listeria</taxon>
    </lineage>
</organism>
<gene>
    <name evidence="1" type="primary">acpS</name>
    <name type="ordered locus">LMOf2365_0904</name>
</gene>
<keyword id="KW-0963">Cytoplasm</keyword>
<keyword id="KW-0275">Fatty acid biosynthesis</keyword>
<keyword id="KW-0276">Fatty acid metabolism</keyword>
<keyword id="KW-0444">Lipid biosynthesis</keyword>
<keyword id="KW-0443">Lipid metabolism</keyword>
<keyword id="KW-0460">Magnesium</keyword>
<keyword id="KW-0479">Metal-binding</keyword>
<keyword id="KW-0808">Transferase</keyword>
<feature type="chain" id="PRO_0000175664" description="Holo-[acyl-carrier-protein] synthase">
    <location>
        <begin position="1"/>
        <end position="118"/>
    </location>
</feature>
<feature type="binding site" evidence="1">
    <location>
        <position position="8"/>
    </location>
    <ligand>
        <name>Mg(2+)</name>
        <dbReference type="ChEBI" id="CHEBI:18420"/>
    </ligand>
</feature>
<feature type="binding site" evidence="1">
    <location>
        <position position="58"/>
    </location>
    <ligand>
        <name>Mg(2+)</name>
        <dbReference type="ChEBI" id="CHEBI:18420"/>
    </ligand>
</feature>
<accession>Q721T0</accession>
<protein>
    <recommendedName>
        <fullName evidence="1">Holo-[acyl-carrier-protein] synthase</fullName>
        <shortName evidence="1">Holo-ACP synthase</shortName>
        <ecNumber evidence="1">2.7.8.7</ecNumber>
    </recommendedName>
    <alternativeName>
        <fullName evidence="1">4'-phosphopantetheinyl transferase AcpS</fullName>
    </alternativeName>
</protein>
<reference key="1">
    <citation type="journal article" date="2004" name="Nucleic Acids Res.">
        <title>Whole genome comparisons of serotype 4b and 1/2a strains of the food-borne pathogen Listeria monocytogenes reveal new insights into the core genome components of this species.</title>
        <authorList>
            <person name="Nelson K.E."/>
            <person name="Fouts D.E."/>
            <person name="Mongodin E.F."/>
            <person name="Ravel J."/>
            <person name="DeBoy R.T."/>
            <person name="Kolonay J.F."/>
            <person name="Rasko D.A."/>
            <person name="Angiuoli S.V."/>
            <person name="Gill S.R."/>
            <person name="Paulsen I.T."/>
            <person name="Peterson J.D."/>
            <person name="White O."/>
            <person name="Nelson W.C."/>
            <person name="Nierman W.C."/>
            <person name="Beanan M.J."/>
            <person name="Brinkac L.M."/>
            <person name="Daugherty S.C."/>
            <person name="Dodson R.J."/>
            <person name="Durkin A.S."/>
            <person name="Madupu R."/>
            <person name="Haft D.H."/>
            <person name="Selengut J."/>
            <person name="Van Aken S.E."/>
            <person name="Khouri H.M."/>
            <person name="Fedorova N."/>
            <person name="Forberger H.A."/>
            <person name="Tran B."/>
            <person name="Kathariou S."/>
            <person name="Wonderling L.D."/>
            <person name="Uhlich G.A."/>
            <person name="Bayles D.O."/>
            <person name="Luchansky J.B."/>
            <person name="Fraser C.M."/>
        </authorList>
    </citation>
    <scope>NUCLEOTIDE SEQUENCE [LARGE SCALE GENOMIC DNA]</scope>
    <source>
        <strain>F2365</strain>
    </source>
</reference>
<comment type="function">
    <text evidence="1">Transfers the 4'-phosphopantetheine moiety from coenzyme A to a Ser of acyl-carrier-protein.</text>
</comment>
<comment type="catalytic activity">
    <reaction evidence="1">
        <text>apo-[ACP] + CoA = holo-[ACP] + adenosine 3',5'-bisphosphate + H(+)</text>
        <dbReference type="Rhea" id="RHEA:12068"/>
        <dbReference type="Rhea" id="RHEA-COMP:9685"/>
        <dbReference type="Rhea" id="RHEA-COMP:9690"/>
        <dbReference type="ChEBI" id="CHEBI:15378"/>
        <dbReference type="ChEBI" id="CHEBI:29999"/>
        <dbReference type="ChEBI" id="CHEBI:57287"/>
        <dbReference type="ChEBI" id="CHEBI:58343"/>
        <dbReference type="ChEBI" id="CHEBI:64479"/>
        <dbReference type="EC" id="2.7.8.7"/>
    </reaction>
</comment>
<comment type="cofactor">
    <cofactor evidence="1">
        <name>Mg(2+)</name>
        <dbReference type="ChEBI" id="CHEBI:18420"/>
    </cofactor>
</comment>
<comment type="subcellular location">
    <subcellularLocation>
        <location evidence="1">Cytoplasm</location>
    </subcellularLocation>
</comment>
<comment type="similarity">
    <text evidence="1">Belongs to the P-Pant transferase superfamily. AcpS family.</text>
</comment>
<sequence length="118" mass="13257">MIKGIGLDMIDLERVKQVVEKNPRFIERVLTEKEIKQFEKYEGNRKIEFLAGRFAAKEAYAKANGTGFGKHLSFTDVEILQVEDGRPHVTLPVKSGENVFVSITHTARSAAAQVIIEI</sequence>
<proteinExistence type="inferred from homology"/>
<name>ACPS_LISMF</name>
<evidence type="ECO:0000255" key="1">
    <source>
        <dbReference type="HAMAP-Rule" id="MF_00101"/>
    </source>
</evidence>